<proteinExistence type="inferred from homology"/>
<protein>
    <recommendedName>
        <fullName evidence="1">Nucleotide-binding protein Acid_3194</fullName>
    </recommendedName>
</protein>
<gene>
    <name type="ordered locus">Acid_3194</name>
</gene>
<dbReference type="EMBL" id="CP000473">
    <property type="protein sequence ID" value="ABJ84171.1"/>
    <property type="molecule type" value="Genomic_DNA"/>
</dbReference>
<dbReference type="SMR" id="Q022D2"/>
<dbReference type="FunCoup" id="Q022D2">
    <property type="interactions" value="341"/>
</dbReference>
<dbReference type="STRING" id="234267.Acid_3194"/>
<dbReference type="KEGG" id="sus:Acid_3194"/>
<dbReference type="eggNOG" id="COG1666">
    <property type="taxonomic scope" value="Bacteria"/>
</dbReference>
<dbReference type="HOGENOM" id="CLU_099839_1_0_0"/>
<dbReference type="InParanoid" id="Q022D2"/>
<dbReference type="OrthoDB" id="9801447at2"/>
<dbReference type="GO" id="GO:0005829">
    <property type="term" value="C:cytosol"/>
    <property type="evidence" value="ECO:0007669"/>
    <property type="project" value="TreeGrafter"/>
</dbReference>
<dbReference type="GO" id="GO:0000166">
    <property type="term" value="F:nucleotide binding"/>
    <property type="evidence" value="ECO:0007669"/>
    <property type="project" value="TreeGrafter"/>
</dbReference>
<dbReference type="CDD" id="cd11740">
    <property type="entry name" value="YajQ_like"/>
    <property type="match status" value="1"/>
</dbReference>
<dbReference type="Gene3D" id="3.30.70.860">
    <property type="match status" value="1"/>
</dbReference>
<dbReference type="Gene3D" id="3.30.70.990">
    <property type="entry name" value="YajQ-like, domain 2"/>
    <property type="match status" value="1"/>
</dbReference>
<dbReference type="HAMAP" id="MF_00632">
    <property type="entry name" value="YajQ"/>
    <property type="match status" value="1"/>
</dbReference>
<dbReference type="InterPro" id="IPR007551">
    <property type="entry name" value="DUF520"/>
</dbReference>
<dbReference type="InterPro" id="IPR035571">
    <property type="entry name" value="UPF0234-like_C"/>
</dbReference>
<dbReference type="InterPro" id="IPR035570">
    <property type="entry name" value="UPF0234_N"/>
</dbReference>
<dbReference type="InterPro" id="IPR036183">
    <property type="entry name" value="YajQ-like_sf"/>
</dbReference>
<dbReference type="NCBIfam" id="NF003819">
    <property type="entry name" value="PRK05412.1"/>
    <property type="match status" value="1"/>
</dbReference>
<dbReference type="PANTHER" id="PTHR30476">
    <property type="entry name" value="UPF0234 PROTEIN YAJQ"/>
    <property type="match status" value="1"/>
</dbReference>
<dbReference type="PANTHER" id="PTHR30476:SF0">
    <property type="entry name" value="UPF0234 PROTEIN YAJQ"/>
    <property type="match status" value="1"/>
</dbReference>
<dbReference type="Pfam" id="PF04461">
    <property type="entry name" value="DUF520"/>
    <property type="match status" value="1"/>
</dbReference>
<dbReference type="SUPFAM" id="SSF89963">
    <property type="entry name" value="YajQ-like"/>
    <property type="match status" value="2"/>
</dbReference>
<accession>Q022D2</accession>
<evidence type="ECO:0000255" key="1">
    <source>
        <dbReference type="HAMAP-Rule" id="MF_00632"/>
    </source>
</evidence>
<sequence>MPDNSFDIVSKIEMPEVHNAVQQAMKEVQQRFDLKDSHSNIELKEKDNKILLQSSDEYKLKNVIDILQSKLVKRNVPLKGLAYGEIIPSAGSTVKQEITLQQGIAIEKARDIVKKLKDSKLKVQASIQGDFVRVAGKDRDTLQSAIALLRGSDFGIDMQFTNYRTN</sequence>
<name>Y3194_SOLUE</name>
<organism>
    <name type="scientific">Solibacter usitatus (strain Ellin6076)</name>
    <dbReference type="NCBI Taxonomy" id="234267"/>
    <lineage>
        <taxon>Bacteria</taxon>
        <taxon>Pseudomonadati</taxon>
        <taxon>Acidobacteriota</taxon>
        <taxon>Terriglobia</taxon>
        <taxon>Bryobacterales</taxon>
        <taxon>Solibacteraceae</taxon>
        <taxon>Candidatus Solibacter</taxon>
    </lineage>
</organism>
<feature type="chain" id="PRO_1000051760" description="Nucleotide-binding protein Acid_3194">
    <location>
        <begin position="1"/>
        <end position="166"/>
    </location>
</feature>
<keyword id="KW-0547">Nucleotide-binding</keyword>
<reference key="1">
    <citation type="journal article" date="2009" name="Appl. Environ. Microbiol.">
        <title>Three genomes from the phylum Acidobacteria provide insight into the lifestyles of these microorganisms in soils.</title>
        <authorList>
            <person name="Ward N.L."/>
            <person name="Challacombe J.F."/>
            <person name="Janssen P.H."/>
            <person name="Henrissat B."/>
            <person name="Coutinho P.M."/>
            <person name="Wu M."/>
            <person name="Xie G."/>
            <person name="Haft D.H."/>
            <person name="Sait M."/>
            <person name="Badger J."/>
            <person name="Barabote R.D."/>
            <person name="Bradley B."/>
            <person name="Brettin T.S."/>
            <person name="Brinkac L.M."/>
            <person name="Bruce D."/>
            <person name="Creasy T."/>
            <person name="Daugherty S.C."/>
            <person name="Davidsen T.M."/>
            <person name="DeBoy R.T."/>
            <person name="Detter J.C."/>
            <person name="Dodson R.J."/>
            <person name="Durkin A.S."/>
            <person name="Ganapathy A."/>
            <person name="Gwinn-Giglio M."/>
            <person name="Han C.S."/>
            <person name="Khouri H."/>
            <person name="Kiss H."/>
            <person name="Kothari S.P."/>
            <person name="Madupu R."/>
            <person name="Nelson K.E."/>
            <person name="Nelson W.C."/>
            <person name="Paulsen I."/>
            <person name="Penn K."/>
            <person name="Ren Q."/>
            <person name="Rosovitz M.J."/>
            <person name="Selengut J.D."/>
            <person name="Shrivastava S."/>
            <person name="Sullivan S.A."/>
            <person name="Tapia R."/>
            <person name="Thompson L.S."/>
            <person name="Watkins K.L."/>
            <person name="Yang Q."/>
            <person name="Yu C."/>
            <person name="Zafar N."/>
            <person name="Zhou L."/>
            <person name="Kuske C.R."/>
        </authorList>
    </citation>
    <scope>NUCLEOTIDE SEQUENCE [LARGE SCALE GENOMIC DNA]</scope>
    <source>
        <strain>Ellin6076</strain>
    </source>
</reference>
<comment type="function">
    <text evidence="1">Nucleotide-binding protein.</text>
</comment>
<comment type="similarity">
    <text evidence="1">Belongs to the YajQ family.</text>
</comment>